<evidence type="ECO:0000250" key="1">
    <source>
        <dbReference type="UniProtKB" id="A0A0B0SG80"/>
    </source>
</evidence>
<evidence type="ECO:0000250" key="2">
    <source>
        <dbReference type="UniProtKB" id="O53604"/>
    </source>
</evidence>
<evidence type="ECO:0000250" key="3">
    <source>
        <dbReference type="UniProtKB" id="O53605"/>
    </source>
</evidence>
<evidence type="ECO:0000255" key="4">
    <source>
        <dbReference type="PROSITE-ProRule" id="PRU00490"/>
    </source>
</evidence>
<evidence type="ECO:0000255" key="5">
    <source>
        <dbReference type="PROSITE-ProRule" id="PRU01362"/>
    </source>
</evidence>
<evidence type="ECO:0000269" key="6">
    <source>
    </source>
</evidence>
<evidence type="ECO:0000303" key="7">
    <source>
    </source>
</evidence>
<evidence type="ECO:0000305" key="8"/>
<evidence type="ECO:0000312" key="9">
    <source>
        <dbReference type="EMBL" id="EKF49129.1"/>
    </source>
</evidence>
<evidence type="ECO:0007744" key="10">
    <source>
        <dbReference type="PDB" id="7OMU"/>
    </source>
</evidence>
<reference evidence="9" key="1">
    <citation type="submission" date="2012-03" db="EMBL/GenBank/DDBJ databases">
        <title>Genome sequence of Thermosipho africanus H17ap60334.</title>
        <authorList>
            <person name="Nesbo C.L."/>
            <person name="Swithers K."/>
            <person name="Dlutek M."/>
            <person name="Marquis P."/>
            <person name="Doolittle F.W."/>
        </authorList>
    </citation>
    <scope>NUCLEOTIDE SEQUENCE [LARGE SCALE GENOMIC DNA]</scope>
    <source>
        <strain evidence="9">H17ap60334</strain>
    </source>
</reference>
<reference evidence="10" key="2">
    <citation type="journal article" date="2021" name="Nature">
        <title>Molecular basis for DarT ADP-ribosylation of a DNA base.</title>
        <authorList>
            <person name="Schuller M."/>
            <person name="Butler R.E."/>
            <person name="Ariza A."/>
            <person name="Tromans-Coia C."/>
            <person name="Jankevicius G."/>
            <person name="Claridge T.D.W."/>
            <person name="Kendall S.L."/>
            <person name="Goh S."/>
            <person name="Stewart G.R."/>
            <person name="Ahel I."/>
        </authorList>
    </citation>
    <scope>X-RAY CRYSTALLOGRAPHY (2.96 ANGSTROMS) IN COMPLEX WITH ADP-RIBOSE</scope>
</reference>
<sequence>MFPRFRELYYITHIDNVPSILEKGILSHAEIERQSINCKKVYDNSIVLKRKSRLLADNRSLWEFANLYFQPRNPMLYRLLVQGLKPKDLAIVAVKWTIMKRDDILITDGNAASSETQIYRKSEIKNIKNIISVKDMEYWREEDGSKRKIMAECLVPQCVDPRYISAIYVSDHEVASNLKKAINNRNIPVIPDPTFFFLPNREIKLTQNLSLVEGDMFFSRMQTLTVSVNTVGVMGKGLASRVKYQFPDVYVVFQDACKKKELEFGKPYLYKRESSLDAFLAEDGEKLSDLNHQTWFLLFPTKRHWKNMSEIKGIESGLRWIVENYKKEGIKSLAVPALGCGLGGLEWSIVGPLMCRYLTKLEIPVQIYLPLEKRIPDVQLSPKFLLDS</sequence>
<name>DARTG_THEA7</name>
<dbReference type="EC" id="2.4.2.-" evidence="2"/>
<dbReference type="EC" id="3.2.2.-" evidence="3"/>
<dbReference type="EMBL" id="AJIP01000032">
    <property type="protein sequence ID" value="EKF49129.1"/>
    <property type="molecule type" value="Genomic_DNA"/>
</dbReference>
<dbReference type="RefSeq" id="WP_004103096.1">
    <property type="nucleotide sequence ID" value="NZ_AJIP01000032.1"/>
</dbReference>
<dbReference type="PDB" id="7OMU">
    <property type="method" value="X-ray"/>
    <property type="resolution" value="2.96 A"/>
    <property type="chains" value="AAA/BBB=1-388"/>
</dbReference>
<dbReference type="PDBsum" id="7OMU"/>
<dbReference type="SMR" id="K2PFJ6"/>
<dbReference type="PATRIC" id="fig|1161912.4.peg.1460"/>
<dbReference type="GO" id="GO:0003677">
    <property type="term" value="F:DNA binding"/>
    <property type="evidence" value="ECO:0007669"/>
    <property type="project" value="UniProtKB-KW"/>
</dbReference>
<dbReference type="GO" id="GO:0016757">
    <property type="term" value="F:glycosyltransferase activity"/>
    <property type="evidence" value="ECO:0007669"/>
    <property type="project" value="UniProtKB-KW"/>
</dbReference>
<dbReference type="GO" id="GO:0016787">
    <property type="term" value="F:hydrolase activity"/>
    <property type="evidence" value="ECO:0007669"/>
    <property type="project" value="UniProtKB-KW"/>
</dbReference>
<dbReference type="GO" id="GO:0016779">
    <property type="term" value="F:nucleotidyltransferase activity"/>
    <property type="evidence" value="ECO:0007669"/>
    <property type="project" value="UniProtKB-KW"/>
</dbReference>
<dbReference type="GO" id="GO:0140291">
    <property type="term" value="P:peptidyl-glutamate ADP-deribosylation"/>
    <property type="evidence" value="ECO:0007669"/>
    <property type="project" value="TreeGrafter"/>
</dbReference>
<dbReference type="CDD" id="cd02901">
    <property type="entry name" value="Macro_Poa1p-like"/>
    <property type="match status" value="1"/>
</dbReference>
<dbReference type="Gene3D" id="3.40.220.10">
    <property type="entry name" value="Leucine Aminopeptidase, subunit E, domain 1"/>
    <property type="match status" value="1"/>
</dbReference>
<dbReference type="InterPro" id="IPR050892">
    <property type="entry name" value="ADP-ribose_metab_enzymes"/>
</dbReference>
<dbReference type="InterPro" id="IPR029494">
    <property type="entry name" value="DarT"/>
</dbReference>
<dbReference type="InterPro" id="IPR002589">
    <property type="entry name" value="Macro_dom"/>
</dbReference>
<dbReference type="InterPro" id="IPR043472">
    <property type="entry name" value="Macro_dom-like"/>
</dbReference>
<dbReference type="PANTHER" id="PTHR12521:SF0">
    <property type="entry name" value="ADP-RIBOSE GLYCOHYDROLASE OARD1"/>
    <property type="match status" value="1"/>
</dbReference>
<dbReference type="PANTHER" id="PTHR12521">
    <property type="entry name" value="PROTEIN C6ORF130"/>
    <property type="match status" value="1"/>
</dbReference>
<dbReference type="Pfam" id="PF14487">
    <property type="entry name" value="DarT"/>
    <property type="match status" value="1"/>
</dbReference>
<dbReference type="Pfam" id="PF01661">
    <property type="entry name" value="Macro"/>
    <property type="match status" value="1"/>
</dbReference>
<dbReference type="SUPFAM" id="SSF52949">
    <property type="entry name" value="Macro domain-like"/>
    <property type="match status" value="1"/>
</dbReference>
<dbReference type="PROSITE" id="PS52018">
    <property type="entry name" value="DART"/>
    <property type="match status" value="1"/>
</dbReference>
<dbReference type="PROSITE" id="PS51154">
    <property type="entry name" value="MACRO"/>
    <property type="match status" value="1"/>
</dbReference>
<feature type="chain" id="PRO_0000456053" description="DNA ADP-ribosyl transferase-DNA ADP-ribosyl glycohydrolase fusion protein">
    <location>
        <begin position="1"/>
        <end position="388"/>
    </location>
</feature>
<feature type="domain" description="DarT" evidence="5">
    <location>
        <begin position="6"/>
        <end position="197"/>
    </location>
</feature>
<feature type="domain" description="Macro" evidence="4">
    <location>
        <begin position="196"/>
        <end position="376"/>
    </location>
</feature>
<feature type="region of interest" description="NAD(+)-binding element" evidence="6">
    <location>
        <begin position="34"/>
        <end position="52"/>
    </location>
</feature>
<feature type="region of interest" description="ADP-ribosylating turn-turn loop" evidence="6">
    <location>
        <begin position="107"/>
        <end position="152"/>
    </location>
</feature>
<feature type="active site" description="Proton acceptor" evidence="5">
    <location>
        <position position="50"/>
    </location>
</feature>
<feature type="active site" evidence="5">
    <location>
        <position position="152"/>
    </location>
</feature>
<feature type="binding site" evidence="5">
    <location>
        <begin position="10"/>
        <end position="12"/>
    </location>
    <ligand>
        <name>NAD(+)</name>
        <dbReference type="ChEBI" id="CHEBI:57540"/>
    </ligand>
</feature>
<feature type="binding site" evidence="5">
    <location>
        <position position="50"/>
    </location>
    <ligand>
        <name>NAD(+)</name>
        <dbReference type="ChEBI" id="CHEBI:57540"/>
    </ligand>
</feature>
<feature type="binding site" evidence="10">
    <location>
        <begin position="215"/>
        <end position="216"/>
    </location>
    <ligand>
        <name>ADP-D-ribose</name>
        <dbReference type="ChEBI" id="CHEBI:57967"/>
    </ligand>
</feature>
<feature type="binding site" evidence="10">
    <location>
        <begin position="227"/>
        <end position="229"/>
    </location>
    <ligand>
        <name>ADP-D-ribose</name>
        <dbReference type="ChEBI" id="CHEBI:57967"/>
    </ligand>
</feature>
<feature type="binding site" evidence="10">
    <location>
        <position position="301"/>
    </location>
    <ligand>
        <name>ADP-D-ribose</name>
        <dbReference type="ChEBI" id="CHEBI:57967"/>
    </ligand>
</feature>
<feature type="binding site" evidence="10">
    <location>
        <begin position="339"/>
        <end position="343"/>
    </location>
    <ligand>
        <name>ADP-D-ribose</name>
        <dbReference type="ChEBI" id="CHEBI:57967"/>
    </ligand>
</feature>
<feature type="binding site" evidence="10">
    <location>
        <begin position="371"/>
        <end position="372"/>
    </location>
    <ligand>
        <name>ADP-D-ribose</name>
        <dbReference type="ChEBI" id="CHEBI:57967"/>
    </ligand>
</feature>
<keyword id="KW-0002">3D-structure</keyword>
<keyword id="KW-0238">DNA-binding</keyword>
<keyword id="KW-0328">Glycosyltransferase</keyword>
<keyword id="KW-0378">Hydrolase</keyword>
<keyword id="KW-0548">Nucleotidyltransferase</keyword>
<keyword id="KW-1277">Toxin-antitoxin system</keyword>
<keyword id="KW-0808">Transferase</keyword>
<accession>K2PFJ6</accession>
<organism>
    <name type="scientific">Thermosipho africanus (strain H17ap60334)</name>
    <dbReference type="NCBI Taxonomy" id="1161912"/>
    <lineage>
        <taxon>Bacteria</taxon>
        <taxon>Thermotogati</taxon>
        <taxon>Thermotogota</taxon>
        <taxon>Thermotogae</taxon>
        <taxon>Thermotogales</taxon>
        <taxon>Fervidobacteriaceae</taxon>
        <taxon>Thermosipho</taxon>
    </lineage>
</organism>
<comment type="function">
    <text evidence="2 3">A fusion protein of the toxic and antitoxin components of a hybrid type II/IV toxin-antitoxin (TA) system. The N-terminal domain ADP-ribosylates ssDNA on a thymidine residue, while the C-terminal domain removes the modification, neutralizing the toxic effect.</text>
</comment>
<comment type="catalytic activity">
    <reaction>
        <text>an N-(ADP-alpha-D-ribosyl)-thymidine in DNA + H2O = a thymidine in DNA + ADP-D-ribose</text>
        <dbReference type="Rhea" id="RHEA:71655"/>
        <dbReference type="Rhea" id="RHEA-COMP:13556"/>
        <dbReference type="Rhea" id="RHEA-COMP:18051"/>
        <dbReference type="ChEBI" id="CHEBI:15377"/>
        <dbReference type="ChEBI" id="CHEBI:57967"/>
        <dbReference type="ChEBI" id="CHEBI:137386"/>
        <dbReference type="ChEBI" id="CHEBI:191199"/>
    </reaction>
    <physiologicalReaction direction="left-to-right" evidence="3">
        <dbReference type="Rhea" id="RHEA:71656"/>
    </physiologicalReaction>
</comment>
<comment type="catalytic activity">
    <reaction evidence="5">
        <text>a thymidine in DNA + NAD(+) = an N-(ADP-alpha-D-ribosyl)-thymidine in DNA + nicotinamide + H(+)</text>
        <dbReference type="Rhea" id="RHEA:71651"/>
        <dbReference type="Rhea" id="RHEA-COMP:13556"/>
        <dbReference type="Rhea" id="RHEA-COMP:18051"/>
        <dbReference type="ChEBI" id="CHEBI:15378"/>
        <dbReference type="ChEBI" id="CHEBI:17154"/>
        <dbReference type="ChEBI" id="CHEBI:57540"/>
        <dbReference type="ChEBI" id="CHEBI:137386"/>
        <dbReference type="ChEBI" id="CHEBI:191199"/>
    </reaction>
    <physiologicalReaction direction="left-to-right" evidence="5">
        <dbReference type="Rhea" id="RHEA:71652"/>
    </physiologicalReaction>
</comment>
<comment type="domain">
    <text evidence="1">The NAD(+)-binding element stabilizes the ADP-ribosylating turn-turn (ARTT) loop which confers substrate specificity; both domains contribute to ssDNA-binding.</text>
</comment>
<comment type="similarity">
    <text evidence="8">In the N-terminal section; belongs to the DarT ADP-ribosyltransferase family.</text>
</comment>
<comment type="similarity">
    <text evidence="8">In the C-terminal section; belongs to the DarG ADP-ribosyl glycohydrolase family.</text>
</comment>
<comment type="caution">
    <text evidence="8">This is a fusion of 2 opposing activities; its in vivo function is unclear.</text>
</comment>
<protein>
    <recommendedName>
        <fullName evidence="8">DNA ADP-ribosyl transferase-DNA ADP-ribosyl glycohydrolase fusion protein</fullName>
        <shortName evidence="7">DarTG</shortName>
        <ecNumber evidence="2">2.4.2.-</ecNumber>
        <ecNumber evidence="3">3.2.2.-</ecNumber>
    </recommendedName>
</protein>
<proteinExistence type="evidence at protein level"/>
<gene>
    <name evidence="8" type="primary">darTG</name>
    <name evidence="9" type="ORF">H17ap60334_07413</name>
</gene>